<sequence length="468" mass="49451">MVVGDFPIETDTIVIGAGPGGYVAAIRAAQLGQKVTIVEKGNLGGVCLNVGCIPSKALLHASHRFVEAQHSENLGVIAESVSLNFQKVQEFKSSVVNKLTGGVEGLLKGNKVNIVKGEAYFVDNNSLRVMDEKSAQTYNFKNAIIATGSRPIEIPNFKFGKRVIDSTGALNLQEVPGKLVVVGGGYIGSELGTAFANFGSEVTILEGAKDILGGFEKQMTQPVKKGMKEKGVEIVTEAMAKSAEETDNGVKVTYEAKGEEKTIEADYVLVTVGRRPNTDELGLEELGVKFADRGLLEVDKQSRTSISNIYAIGDIVPGLPLAHKASYEAKVAAEAIDGQAAEVDYIGMPAVCFTEPELATVGYSEAQAKEEGLAIKASKFPYAANGRALSLDDTNGFVKLITLKEDDTLIGAQVVGTGASDIISELGLAIEAGMNAEDIALTIHAHPTLGEMTMEAAEKAIGYPIHTM</sequence>
<organism>
    <name type="scientific">Staphylococcus aureus (strain COL)</name>
    <dbReference type="NCBI Taxonomy" id="93062"/>
    <lineage>
        <taxon>Bacteria</taxon>
        <taxon>Bacillati</taxon>
        <taxon>Bacillota</taxon>
        <taxon>Bacilli</taxon>
        <taxon>Bacillales</taxon>
        <taxon>Staphylococcaceae</taxon>
        <taxon>Staphylococcus</taxon>
    </lineage>
</organism>
<accession>Q5HGY8</accession>
<name>DLDH_STAAC</name>
<gene>
    <name type="primary">pdhD</name>
    <name type="ordered locus">SACOL1105</name>
</gene>
<protein>
    <recommendedName>
        <fullName>Dihydrolipoyl dehydrogenase</fullName>
        <ecNumber>1.8.1.4</ecNumber>
    </recommendedName>
    <alternativeName>
        <fullName>Dihydrolipoamide dehydrogenase</fullName>
    </alternativeName>
    <alternativeName>
        <fullName>E3 component of pyruvate complex</fullName>
    </alternativeName>
    <alternativeName>
        <fullName>Membrane-bound ribosome protein complex 50 kDa subunit</fullName>
    </alternativeName>
</protein>
<comment type="function">
    <text evidence="1">Lipoamide dehydrogenase is a component of the alpha-ketoacid dehydrogenase complexes.</text>
</comment>
<comment type="catalytic activity">
    <reaction>
        <text>N(6)-[(R)-dihydrolipoyl]-L-lysyl-[protein] + NAD(+) = N(6)-[(R)-lipoyl]-L-lysyl-[protein] + NADH + H(+)</text>
        <dbReference type="Rhea" id="RHEA:15045"/>
        <dbReference type="Rhea" id="RHEA-COMP:10474"/>
        <dbReference type="Rhea" id="RHEA-COMP:10475"/>
        <dbReference type="ChEBI" id="CHEBI:15378"/>
        <dbReference type="ChEBI" id="CHEBI:57540"/>
        <dbReference type="ChEBI" id="CHEBI:57945"/>
        <dbReference type="ChEBI" id="CHEBI:83099"/>
        <dbReference type="ChEBI" id="CHEBI:83100"/>
        <dbReference type="EC" id="1.8.1.4"/>
    </reaction>
</comment>
<comment type="cofactor">
    <cofactor evidence="1">
        <name>FAD</name>
        <dbReference type="ChEBI" id="CHEBI:57692"/>
    </cofactor>
    <text evidence="1">Binds 1 FAD per subunit.</text>
</comment>
<comment type="subunit">
    <text evidence="1">Homodimer.</text>
</comment>
<comment type="subcellular location">
    <subcellularLocation>
        <location evidence="2">Cytoplasm</location>
    </subcellularLocation>
    <subcellularLocation>
        <location>Membrane</location>
        <topology>Peripheral membrane protein</topology>
    </subcellularLocation>
</comment>
<comment type="miscellaneous">
    <text>The active site is a redox-active disulfide bond.</text>
</comment>
<comment type="similarity">
    <text evidence="2">Belongs to the class-I pyridine nucleotide-disulfide oxidoreductase family.</text>
</comment>
<feature type="chain" id="PRO_0000068044" description="Dihydrolipoyl dehydrogenase">
    <location>
        <begin position="1"/>
        <end position="468"/>
    </location>
</feature>
<feature type="active site" description="Proton acceptor" evidence="1">
    <location>
        <position position="446"/>
    </location>
</feature>
<feature type="binding site" evidence="1">
    <location>
        <begin position="39"/>
        <end position="47"/>
    </location>
    <ligand>
        <name>FAD</name>
        <dbReference type="ChEBI" id="CHEBI:57692"/>
    </ligand>
</feature>
<feature type="binding site" evidence="1">
    <location>
        <position position="56"/>
    </location>
    <ligand>
        <name>FAD</name>
        <dbReference type="ChEBI" id="CHEBI:57692"/>
    </ligand>
</feature>
<feature type="binding site" evidence="1">
    <location>
        <position position="119"/>
    </location>
    <ligand>
        <name>FAD</name>
        <dbReference type="ChEBI" id="CHEBI:57692"/>
    </ligand>
</feature>
<feature type="binding site" evidence="1">
    <location>
        <begin position="183"/>
        <end position="187"/>
    </location>
    <ligand>
        <name>NAD(+)</name>
        <dbReference type="ChEBI" id="CHEBI:57540"/>
    </ligand>
</feature>
<feature type="binding site" evidence="1">
    <location>
        <position position="206"/>
    </location>
    <ligand>
        <name>NAD(+)</name>
        <dbReference type="ChEBI" id="CHEBI:57540"/>
    </ligand>
</feature>
<feature type="binding site" evidence="1">
    <location>
        <begin position="271"/>
        <end position="274"/>
    </location>
    <ligand>
        <name>NAD(+)</name>
        <dbReference type="ChEBI" id="CHEBI:57540"/>
    </ligand>
</feature>
<feature type="binding site" evidence="1">
    <location>
        <position position="314"/>
    </location>
    <ligand>
        <name>FAD</name>
        <dbReference type="ChEBI" id="CHEBI:57692"/>
    </ligand>
</feature>
<feature type="binding site" evidence="1">
    <location>
        <position position="322"/>
    </location>
    <ligand>
        <name>FAD</name>
        <dbReference type="ChEBI" id="CHEBI:57692"/>
    </ligand>
</feature>
<feature type="disulfide bond" description="Redox-active" evidence="1">
    <location>
        <begin position="47"/>
        <end position="52"/>
    </location>
</feature>
<proteinExistence type="inferred from homology"/>
<keyword id="KW-0963">Cytoplasm</keyword>
<keyword id="KW-1015">Disulfide bond</keyword>
<keyword id="KW-0274">FAD</keyword>
<keyword id="KW-0285">Flavoprotein</keyword>
<keyword id="KW-0472">Membrane</keyword>
<keyword id="KW-0520">NAD</keyword>
<keyword id="KW-0560">Oxidoreductase</keyword>
<keyword id="KW-0676">Redox-active center</keyword>
<evidence type="ECO:0000250" key="1"/>
<evidence type="ECO:0000305" key="2"/>
<dbReference type="EC" id="1.8.1.4"/>
<dbReference type="EMBL" id="CP000046">
    <property type="protein sequence ID" value="AAW37985.1"/>
    <property type="molecule type" value="Genomic_DNA"/>
</dbReference>
<dbReference type="SMR" id="Q5HGY8"/>
<dbReference type="KEGG" id="sac:SACOL1105"/>
<dbReference type="HOGENOM" id="CLU_016755_0_3_9"/>
<dbReference type="Proteomes" id="UP000000530">
    <property type="component" value="Chromosome"/>
</dbReference>
<dbReference type="GO" id="GO:0005737">
    <property type="term" value="C:cytoplasm"/>
    <property type="evidence" value="ECO:0007669"/>
    <property type="project" value="UniProtKB-SubCell"/>
</dbReference>
<dbReference type="GO" id="GO:0016020">
    <property type="term" value="C:membrane"/>
    <property type="evidence" value="ECO:0007669"/>
    <property type="project" value="UniProtKB-SubCell"/>
</dbReference>
<dbReference type="GO" id="GO:0004148">
    <property type="term" value="F:dihydrolipoyl dehydrogenase (NADH) activity"/>
    <property type="evidence" value="ECO:0007669"/>
    <property type="project" value="UniProtKB-EC"/>
</dbReference>
<dbReference type="GO" id="GO:0050660">
    <property type="term" value="F:flavin adenine dinucleotide binding"/>
    <property type="evidence" value="ECO:0007669"/>
    <property type="project" value="InterPro"/>
</dbReference>
<dbReference type="GO" id="GO:0006103">
    <property type="term" value="P:2-oxoglutarate metabolic process"/>
    <property type="evidence" value="ECO:0007669"/>
    <property type="project" value="TreeGrafter"/>
</dbReference>
<dbReference type="FunFam" id="3.30.390.30:FF:000001">
    <property type="entry name" value="Dihydrolipoyl dehydrogenase"/>
    <property type="match status" value="1"/>
</dbReference>
<dbReference type="FunFam" id="3.50.50.60:FF:000037">
    <property type="entry name" value="Dihydrolipoyl dehydrogenase"/>
    <property type="match status" value="1"/>
</dbReference>
<dbReference type="Gene3D" id="3.30.390.30">
    <property type="match status" value="1"/>
</dbReference>
<dbReference type="Gene3D" id="3.50.50.60">
    <property type="entry name" value="FAD/NAD(P)-binding domain"/>
    <property type="match status" value="2"/>
</dbReference>
<dbReference type="InterPro" id="IPR050151">
    <property type="entry name" value="Class-I_Pyr_Nuc-Dis_Oxidored"/>
</dbReference>
<dbReference type="InterPro" id="IPR036188">
    <property type="entry name" value="FAD/NAD-bd_sf"/>
</dbReference>
<dbReference type="InterPro" id="IPR023753">
    <property type="entry name" value="FAD/NAD-binding_dom"/>
</dbReference>
<dbReference type="InterPro" id="IPR016156">
    <property type="entry name" value="FAD/NAD-linked_Rdtase_dimer_sf"/>
</dbReference>
<dbReference type="InterPro" id="IPR006258">
    <property type="entry name" value="Lipoamide_DH"/>
</dbReference>
<dbReference type="InterPro" id="IPR001100">
    <property type="entry name" value="Pyr_nuc-diS_OxRdtase"/>
</dbReference>
<dbReference type="InterPro" id="IPR004099">
    <property type="entry name" value="Pyr_nucl-diS_OxRdtase_dimer"/>
</dbReference>
<dbReference type="InterPro" id="IPR012999">
    <property type="entry name" value="Pyr_OxRdtase_I_AS"/>
</dbReference>
<dbReference type="NCBIfam" id="TIGR01350">
    <property type="entry name" value="lipoamide_DH"/>
    <property type="match status" value="1"/>
</dbReference>
<dbReference type="PANTHER" id="PTHR22912:SF160">
    <property type="entry name" value="DIHYDROLIPOYL DEHYDROGENASE"/>
    <property type="match status" value="1"/>
</dbReference>
<dbReference type="PANTHER" id="PTHR22912">
    <property type="entry name" value="DISULFIDE OXIDOREDUCTASE"/>
    <property type="match status" value="1"/>
</dbReference>
<dbReference type="Pfam" id="PF07992">
    <property type="entry name" value="Pyr_redox_2"/>
    <property type="match status" value="1"/>
</dbReference>
<dbReference type="Pfam" id="PF02852">
    <property type="entry name" value="Pyr_redox_dim"/>
    <property type="match status" value="1"/>
</dbReference>
<dbReference type="PIRSF" id="PIRSF000350">
    <property type="entry name" value="Mercury_reductase_MerA"/>
    <property type="match status" value="1"/>
</dbReference>
<dbReference type="PRINTS" id="PR00368">
    <property type="entry name" value="FADPNR"/>
</dbReference>
<dbReference type="PRINTS" id="PR00411">
    <property type="entry name" value="PNDRDTASEI"/>
</dbReference>
<dbReference type="SUPFAM" id="SSF51905">
    <property type="entry name" value="FAD/NAD(P)-binding domain"/>
    <property type="match status" value="1"/>
</dbReference>
<dbReference type="SUPFAM" id="SSF55424">
    <property type="entry name" value="FAD/NAD-linked reductases, dimerisation (C-terminal) domain"/>
    <property type="match status" value="1"/>
</dbReference>
<dbReference type="PROSITE" id="PS00076">
    <property type="entry name" value="PYRIDINE_REDOX_1"/>
    <property type="match status" value="1"/>
</dbReference>
<reference key="1">
    <citation type="journal article" date="2005" name="J. Bacteriol.">
        <title>Insights on evolution of virulence and resistance from the complete genome analysis of an early methicillin-resistant Staphylococcus aureus strain and a biofilm-producing methicillin-resistant Staphylococcus epidermidis strain.</title>
        <authorList>
            <person name="Gill S.R."/>
            <person name="Fouts D.E."/>
            <person name="Archer G.L."/>
            <person name="Mongodin E.F."/>
            <person name="DeBoy R.T."/>
            <person name="Ravel J."/>
            <person name="Paulsen I.T."/>
            <person name="Kolonay J.F."/>
            <person name="Brinkac L.M."/>
            <person name="Beanan M.J."/>
            <person name="Dodson R.J."/>
            <person name="Daugherty S.C."/>
            <person name="Madupu R."/>
            <person name="Angiuoli S.V."/>
            <person name="Durkin A.S."/>
            <person name="Haft D.H."/>
            <person name="Vamathevan J.J."/>
            <person name="Khouri H."/>
            <person name="Utterback T.R."/>
            <person name="Lee C."/>
            <person name="Dimitrov G."/>
            <person name="Jiang L."/>
            <person name="Qin H."/>
            <person name="Weidman J."/>
            <person name="Tran K."/>
            <person name="Kang K.H."/>
            <person name="Hance I.R."/>
            <person name="Nelson K.E."/>
            <person name="Fraser C.M."/>
        </authorList>
    </citation>
    <scope>NUCLEOTIDE SEQUENCE [LARGE SCALE GENOMIC DNA]</scope>
    <source>
        <strain>COL</strain>
    </source>
</reference>